<feature type="signal peptide" evidence="1">
    <location>
        <begin position="1"/>
        <end position="26"/>
    </location>
</feature>
<feature type="chain" id="PRO_0000056409" description="Transmembrane E3 ubiquitin-protein ligase 1">
    <location>
        <begin position="27"/>
        <end position="758"/>
    </location>
</feature>
<feature type="topological domain" description="Lumenal" evidence="1">
    <location>
        <begin position="27"/>
        <end position="398"/>
    </location>
</feature>
<feature type="transmembrane region" description="Helical" evidence="1">
    <location>
        <begin position="399"/>
        <end position="419"/>
    </location>
</feature>
<feature type="topological domain" description="Cytoplasmic" evidence="1">
    <location>
        <begin position="420"/>
        <end position="431"/>
    </location>
</feature>
<feature type="transmembrane region" description="Helical" evidence="1">
    <location>
        <begin position="432"/>
        <end position="452"/>
    </location>
</feature>
<feature type="topological domain" description="Lumenal" evidence="1">
    <location>
        <begin position="453"/>
        <end position="458"/>
    </location>
</feature>
<feature type="transmembrane region" description="Helical" evidence="1">
    <location>
        <begin position="459"/>
        <end position="479"/>
    </location>
</feature>
<feature type="topological domain" description="Cytoplasmic" evidence="1">
    <location>
        <begin position="480"/>
        <end position="523"/>
    </location>
</feature>
<feature type="transmembrane region" description="Helical" evidence="1">
    <location>
        <begin position="524"/>
        <end position="544"/>
    </location>
</feature>
<feature type="topological domain" description="Lumenal" evidence="1">
    <location>
        <begin position="545"/>
        <end position="553"/>
    </location>
</feature>
<feature type="transmembrane region" description="Helical" evidence="1">
    <location>
        <begin position="554"/>
        <end position="574"/>
    </location>
</feature>
<feature type="topological domain" description="Cytoplasmic" evidence="1">
    <location>
        <begin position="575"/>
        <end position="602"/>
    </location>
</feature>
<feature type="transmembrane region" description="Helical" evidence="1">
    <location>
        <begin position="603"/>
        <end position="623"/>
    </location>
</feature>
<feature type="topological domain" description="Lumenal" evidence="1">
    <location>
        <begin position="624"/>
        <end position="635"/>
    </location>
</feature>
<feature type="transmembrane region" description="Helical" evidence="1">
    <location>
        <begin position="636"/>
        <end position="656"/>
    </location>
</feature>
<feature type="topological domain" description="Cytoplasmic" evidence="1">
    <location>
        <begin position="657"/>
        <end position="758"/>
    </location>
</feature>
<feature type="zinc finger region" description="RING-type; atypical" evidence="2">
    <location>
        <begin position="699"/>
        <end position="752"/>
    </location>
</feature>
<comment type="function">
    <text evidence="3 4 5 6">Catalytic component of the DSC E3 ubiquitin ligase complexes that tag proteins present in Golgi, endosome and vacuole membranes and function in protein homeostasis under non-stress conditions and support a role in protein quality control (PubMed:25078903, PubMed:29355480). Mediates ubiquitination of vacuolar proteins such as CPS1, PPN1, PEP12 and other proteins containing exposed hydrophilic residues within their transmembrane domains, leading to their sorting into internal vesicles in late endosomes (PubMed:11788821). Targets also the unpalmitoylated endosomal SNARE TLG1 to the MVB pathway (PubMed:15973437).</text>
</comment>
<comment type="catalytic activity">
    <reaction>
        <text>S-ubiquitinyl-[E2 ubiquitin-conjugating enzyme]-L-cysteine + [acceptor protein]-L-lysine = [E2 ubiquitin-conjugating enzyme]-L-cysteine + N(6)-ubiquitinyl-[acceptor protein]-L-lysine.</text>
        <dbReference type="EC" id="2.3.2.27"/>
    </reaction>
</comment>
<comment type="pathway">
    <text>Protein modification; protein ubiquitination.</text>
</comment>
<comment type="subunit">
    <text evidence="3 5 6">Component of the DSC E3 ligase complexes composed of at least TUL1, DSC2, DSC3, UBX3, CDC48 as well as VLD1 for the vacuole-localized complex or GLD1 for the Golgi/endosome-localized complex (PubMed:25078903, PubMed:29355480). Interacts with UBC4 (PubMed:11788821).</text>
</comment>
<comment type="subcellular location">
    <subcellularLocation>
        <location evidence="3">Golgi apparatus membrane</location>
        <topology evidence="3">Multi-pass membrane protein</topology>
    </subcellularLocation>
</comment>
<accession>P36096</accession>
<accession>D6VXQ1</accession>
<reference key="1">
    <citation type="journal article" date="1994" name="Yeast">
        <title>Analysis of an 11.7 kb DNA fragment of chromosome XI reveals a new tRNA gene and four new open reading frames including a leucine zipper protein and a homologue to the yeast mitochondrial regulator ABF2.</title>
        <authorList>
            <person name="Purnelle B."/>
            <person name="Skala J."/>
            <person name="van Dyck L."/>
            <person name="Goffeau A."/>
        </authorList>
    </citation>
    <scope>NUCLEOTIDE SEQUENCE [GENOMIC DNA]</scope>
    <source>
        <strain>ATCC 204508 / S288c</strain>
    </source>
</reference>
<reference key="2">
    <citation type="journal article" date="1994" name="Nature">
        <title>Complete DNA sequence of yeast chromosome XI.</title>
        <authorList>
            <person name="Dujon B."/>
            <person name="Alexandraki D."/>
            <person name="Andre B."/>
            <person name="Ansorge W."/>
            <person name="Baladron V."/>
            <person name="Ballesta J.P.G."/>
            <person name="Banrevi A."/>
            <person name="Bolle P.-A."/>
            <person name="Bolotin-Fukuhara M."/>
            <person name="Bossier P."/>
            <person name="Bou G."/>
            <person name="Boyer J."/>
            <person name="Buitrago M.J."/>
            <person name="Cheret G."/>
            <person name="Colleaux L."/>
            <person name="Daignan-Fornier B."/>
            <person name="del Rey F."/>
            <person name="Dion C."/>
            <person name="Domdey H."/>
            <person name="Duesterhoeft A."/>
            <person name="Duesterhus S."/>
            <person name="Entian K.-D."/>
            <person name="Erfle H."/>
            <person name="Esteban P.F."/>
            <person name="Feldmann H."/>
            <person name="Fernandes L."/>
            <person name="Fobo G.M."/>
            <person name="Fritz C."/>
            <person name="Fukuhara H."/>
            <person name="Gabel C."/>
            <person name="Gaillon L."/>
            <person name="Garcia-Cantalejo J.M."/>
            <person name="Garcia-Ramirez J.J."/>
            <person name="Gent M.E."/>
            <person name="Ghazvini M."/>
            <person name="Goffeau A."/>
            <person name="Gonzalez A."/>
            <person name="Grothues D."/>
            <person name="Guerreiro P."/>
            <person name="Hegemann J.H."/>
            <person name="Hewitt N."/>
            <person name="Hilger F."/>
            <person name="Hollenberg C.P."/>
            <person name="Horaitis O."/>
            <person name="Indge K.J."/>
            <person name="Jacquier A."/>
            <person name="James C.M."/>
            <person name="Jauniaux J.-C."/>
            <person name="Jimenez A."/>
            <person name="Keuchel H."/>
            <person name="Kirchrath L."/>
            <person name="Kleine K."/>
            <person name="Koetter P."/>
            <person name="Legrain P."/>
            <person name="Liebl S."/>
            <person name="Louis E.J."/>
            <person name="Maia e Silva A."/>
            <person name="Marck C."/>
            <person name="Monnier A.-L."/>
            <person name="Moestl D."/>
            <person name="Mueller S."/>
            <person name="Obermaier B."/>
            <person name="Oliver S.G."/>
            <person name="Pallier C."/>
            <person name="Pascolo S."/>
            <person name="Pfeiffer F."/>
            <person name="Philippsen P."/>
            <person name="Planta R.J."/>
            <person name="Pohl F.M."/>
            <person name="Pohl T.M."/>
            <person name="Poehlmann R."/>
            <person name="Portetelle D."/>
            <person name="Purnelle B."/>
            <person name="Puzos V."/>
            <person name="Ramezani Rad M."/>
            <person name="Rasmussen S.W."/>
            <person name="Remacha M.A."/>
            <person name="Revuelta J.L."/>
            <person name="Richard G.-F."/>
            <person name="Rieger M."/>
            <person name="Rodrigues-Pousada C."/>
            <person name="Rose M."/>
            <person name="Rupp T."/>
            <person name="Santos M.A."/>
            <person name="Schwager C."/>
            <person name="Sensen C."/>
            <person name="Skala J."/>
            <person name="Soares H."/>
            <person name="Sor F."/>
            <person name="Stegemann J."/>
            <person name="Tettelin H."/>
            <person name="Thierry A."/>
            <person name="Tzermia M."/>
            <person name="Urrestarazu L.A."/>
            <person name="van Dyck L."/>
            <person name="van Vliet-Reedijk J.C."/>
            <person name="Valens M."/>
            <person name="Vandenbol M."/>
            <person name="Vilela C."/>
            <person name="Vissers S."/>
            <person name="von Wettstein D."/>
            <person name="Voss H."/>
            <person name="Wiemann S."/>
            <person name="Xu G."/>
            <person name="Zimmermann J."/>
            <person name="Haasemann M."/>
            <person name="Becker I."/>
            <person name="Mewes H.-W."/>
        </authorList>
    </citation>
    <scope>NUCLEOTIDE SEQUENCE [LARGE SCALE GENOMIC DNA]</scope>
    <source>
        <strain>ATCC 204508 / S288c</strain>
    </source>
</reference>
<reference key="3">
    <citation type="journal article" date="2014" name="G3 (Bethesda)">
        <title>The reference genome sequence of Saccharomyces cerevisiae: Then and now.</title>
        <authorList>
            <person name="Engel S.R."/>
            <person name="Dietrich F.S."/>
            <person name="Fisk D.G."/>
            <person name="Binkley G."/>
            <person name="Balakrishnan R."/>
            <person name="Costanzo M.C."/>
            <person name="Dwight S.S."/>
            <person name="Hitz B.C."/>
            <person name="Karra K."/>
            <person name="Nash R.S."/>
            <person name="Weng S."/>
            <person name="Wong E.D."/>
            <person name="Lloyd P."/>
            <person name="Skrzypek M.S."/>
            <person name="Miyasato S.R."/>
            <person name="Simison M."/>
            <person name="Cherry J.M."/>
        </authorList>
    </citation>
    <scope>GENOME REANNOTATION</scope>
    <source>
        <strain>ATCC 204508 / S288c</strain>
    </source>
</reference>
<reference key="4">
    <citation type="journal article" date="1992" name="Yeast">
        <title>The sequence of a 12 kb fragment on the left arm of yeast chromosome XI reveals five new open reading frames, including a zinc finger protein and a homolog of the UDP-glucose pyrophosphorylase from potato.</title>
        <authorList>
            <person name="Purnelle B."/>
            <person name="Skala J."/>
            <person name="van Dyck L."/>
            <person name="Goffeau A."/>
        </authorList>
    </citation>
    <scope>NUCLEOTIDE SEQUENCE [GENOMIC DNA] OF 1-570</scope>
    <source>
        <strain>ATCC 204508 / S288c</strain>
    </source>
</reference>
<reference key="5">
    <citation type="journal article" date="2002" name="Nat. Cell Biol.">
        <title>A transmembrane ubiquitin ligase required to sort membrane proteins into multivesicular bodies.</title>
        <authorList>
            <person name="Reggiori F."/>
            <person name="Pelham H.R.B."/>
        </authorList>
    </citation>
    <scope>FUNCTION</scope>
    <scope>SUBCELLULAR LOCATION</scope>
    <scope>INTERACTION WITH UBC4</scope>
</reference>
<reference key="6">
    <citation type="journal article" date="2005" name="EMBO J.">
        <title>Swf1-dependent palmitoylation of the SNARE Tlg1 prevents its ubiquitination and degradation.</title>
        <authorList>
            <person name="Valdez-Taubas J."/>
            <person name="Pelham H.R.B."/>
        </authorList>
    </citation>
    <scope>FUNCTION</scope>
</reference>
<reference key="7">
    <citation type="journal article" date="2006" name="Proc. Natl. Acad. Sci. U.S.A.">
        <title>A global topology map of the Saccharomyces cerevisiae membrane proteome.</title>
        <authorList>
            <person name="Kim H."/>
            <person name="Melen K."/>
            <person name="Oesterberg M."/>
            <person name="von Heijne G."/>
        </authorList>
    </citation>
    <scope>TOPOLOGY [LARGE SCALE ANALYSIS]</scope>
    <source>
        <strain>ATCC 208353 / W303-1A</strain>
    </source>
</reference>
<reference key="8">
    <citation type="journal article" date="2014" name="Mol. Cell. Proteomics">
        <title>Identification of candidate substrates for the Golgi Tul1 E3 ligase using quantitative diGly proteomics in yeast.</title>
        <authorList>
            <person name="Tong Z."/>
            <person name="Kim M.S."/>
            <person name="Pandey A."/>
            <person name="Espenshade P.J."/>
        </authorList>
    </citation>
    <scope>FUNCTION</scope>
    <scope>IDENTIFICATION IN THE DSC E3 UBIQUITIN LIGASE COMPLEX</scope>
</reference>
<reference key="9">
    <citation type="journal article" date="2018" name="Elife">
        <title>Sorting of a multi-subunit ubiquitin ligase complex in the endolysosome system.</title>
        <authorList>
            <person name="Yang X."/>
            <person name="Arines F.M."/>
            <person name="Zhang W."/>
            <person name="Li M."/>
        </authorList>
    </citation>
    <scope>FUNCTION</scope>
    <scope>SUBCELLULAR LOCATION</scope>
    <scope>SUBUNIT</scope>
</reference>
<keyword id="KW-0333">Golgi apparatus</keyword>
<keyword id="KW-0472">Membrane</keyword>
<keyword id="KW-0479">Metal-binding</keyword>
<keyword id="KW-1185">Reference proteome</keyword>
<keyword id="KW-0732">Signal</keyword>
<keyword id="KW-0808">Transferase</keyword>
<keyword id="KW-0812">Transmembrane</keyword>
<keyword id="KW-1133">Transmembrane helix</keyword>
<keyword id="KW-0833">Ubl conjugation pathway</keyword>
<keyword id="KW-0862">Zinc</keyword>
<keyword id="KW-0863">Zinc-finger</keyword>
<organism>
    <name type="scientific">Saccharomyces cerevisiae (strain ATCC 204508 / S288c)</name>
    <name type="common">Baker's yeast</name>
    <dbReference type="NCBI Taxonomy" id="559292"/>
    <lineage>
        <taxon>Eukaryota</taxon>
        <taxon>Fungi</taxon>
        <taxon>Dikarya</taxon>
        <taxon>Ascomycota</taxon>
        <taxon>Saccharomycotina</taxon>
        <taxon>Saccharomycetes</taxon>
        <taxon>Saccharomycetales</taxon>
        <taxon>Saccharomycetaceae</taxon>
        <taxon>Saccharomyces</taxon>
    </lineage>
</organism>
<proteinExistence type="evidence at protein level"/>
<name>TUL1_YEAST</name>
<evidence type="ECO:0000255" key="1"/>
<evidence type="ECO:0000255" key="2">
    <source>
        <dbReference type="PROSITE-ProRule" id="PRU00175"/>
    </source>
</evidence>
<evidence type="ECO:0000269" key="3">
    <source>
    </source>
</evidence>
<evidence type="ECO:0000269" key="4">
    <source>
    </source>
</evidence>
<evidence type="ECO:0000269" key="5">
    <source>
    </source>
</evidence>
<evidence type="ECO:0000269" key="6">
    <source>
    </source>
</evidence>
<evidence type="ECO:0000305" key="7"/>
<gene>
    <name type="primary">TUL1</name>
    <name type="ordered locus">YKL034W</name>
    <name type="ORF">YKL247</name>
</gene>
<protein>
    <recommendedName>
        <fullName>Transmembrane E3 ubiquitin-protein ligase 1</fullName>
        <ecNumber>2.3.2.27</ecNumber>
    </recommendedName>
    <alternativeName>
        <fullName evidence="7">RING-type E3 ubiquitin transferase TUL1</fullName>
    </alternativeName>
</protein>
<dbReference type="EC" id="2.3.2.27"/>
<dbReference type="EMBL" id="X71622">
    <property type="status" value="NOT_ANNOTATED_CDS"/>
    <property type="molecule type" value="Genomic_DNA"/>
</dbReference>
<dbReference type="EMBL" id="X69584">
    <property type="protein sequence ID" value="CAA49298.1"/>
    <property type="molecule type" value="Genomic_DNA"/>
</dbReference>
<dbReference type="EMBL" id="Z28034">
    <property type="protein sequence ID" value="CAA81869.1"/>
    <property type="molecule type" value="Genomic_DNA"/>
</dbReference>
<dbReference type="EMBL" id="BK006944">
    <property type="protein sequence ID" value="DAA09121.1"/>
    <property type="molecule type" value="Genomic_DNA"/>
</dbReference>
<dbReference type="PIR" id="S37855">
    <property type="entry name" value="S37855"/>
</dbReference>
<dbReference type="RefSeq" id="NP_012890.1">
    <property type="nucleotide sequence ID" value="NM_001179600.1"/>
</dbReference>
<dbReference type="BioGRID" id="34097">
    <property type="interactions" value="108"/>
</dbReference>
<dbReference type="ComplexPortal" id="CPX-1190">
    <property type="entry name" value="TUL1 E3 ubiquitin ligase complex"/>
</dbReference>
<dbReference type="DIP" id="DIP-5413N"/>
<dbReference type="FunCoup" id="P36096">
    <property type="interactions" value="63"/>
</dbReference>
<dbReference type="IntAct" id="P36096">
    <property type="interactions" value="4"/>
</dbReference>
<dbReference type="STRING" id="4932.YKL034W"/>
<dbReference type="PaxDb" id="4932-YKL034W"/>
<dbReference type="PeptideAtlas" id="P36096"/>
<dbReference type="EnsemblFungi" id="YKL034W_mRNA">
    <property type="protein sequence ID" value="YKL034W"/>
    <property type="gene ID" value="YKL034W"/>
</dbReference>
<dbReference type="GeneID" id="853832"/>
<dbReference type="KEGG" id="sce:YKL034W"/>
<dbReference type="AGR" id="SGD:S000001517"/>
<dbReference type="SGD" id="S000001517">
    <property type="gene designation" value="TUL1"/>
</dbReference>
<dbReference type="VEuPathDB" id="FungiDB:YKL034W"/>
<dbReference type="eggNOG" id="KOG0828">
    <property type="taxonomic scope" value="Eukaryota"/>
</dbReference>
<dbReference type="HOGENOM" id="CLU_010475_1_0_1"/>
<dbReference type="InParanoid" id="P36096"/>
<dbReference type="OMA" id="LEGWMRF"/>
<dbReference type="OrthoDB" id="9984778at2759"/>
<dbReference type="BioCyc" id="YEAST:G3O-31837-MONOMER"/>
<dbReference type="UniPathway" id="UPA00143"/>
<dbReference type="BioGRID-ORCS" id="853832">
    <property type="hits" value="0 hits in 10 CRISPR screens"/>
</dbReference>
<dbReference type="PRO" id="PR:P36096"/>
<dbReference type="Proteomes" id="UP000002311">
    <property type="component" value="Chromosome XI"/>
</dbReference>
<dbReference type="RNAct" id="P36096">
    <property type="molecule type" value="protein"/>
</dbReference>
<dbReference type="GO" id="GO:0044695">
    <property type="term" value="C:Dsc E3 ubiquitin ligase complex"/>
    <property type="evidence" value="ECO:0000314"/>
    <property type="project" value="SGD"/>
</dbReference>
<dbReference type="GO" id="GO:0012505">
    <property type="term" value="C:endomembrane system"/>
    <property type="evidence" value="ECO:0000318"/>
    <property type="project" value="GO_Central"/>
</dbReference>
<dbReference type="GO" id="GO:0000324">
    <property type="term" value="C:fungal-type vacuole"/>
    <property type="evidence" value="ECO:0007005"/>
    <property type="project" value="SGD"/>
</dbReference>
<dbReference type="GO" id="GO:0005794">
    <property type="term" value="C:Golgi apparatus"/>
    <property type="evidence" value="ECO:0000314"/>
    <property type="project" value="SGD"/>
</dbReference>
<dbReference type="GO" id="GO:0000139">
    <property type="term" value="C:Golgi membrane"/>
    <property type="evidence" value="ECO:0000303"/>
    <property type="project" value="ComplexPortal"/>
</dbReference>
<dbReference type="GO" id="GO:0061630">
    <property type="term" value="F:ubiquitin protein ligase activity"/>
    <property type="evidence" value="ECO:0000318"/>
    <property type="project" value="GO_Central"/>
</dbReference>
<dbReference type="GO" id="GO:0004842">
    <property type="term" value="F:ubiquitin-protein transferase activity"/>
    <property type="evidence" value="ECO:0000315"/>
    <property type="project" value="SGD"/>
</dbReference>
<dbReference type="GO" id="GO:0008270">
    <property type="term" value="F:zinc ion binding"/>
    <property type="evidence" value="ECO:0007669"/>
    <property type="project" value="UniProtKB-KW"/>
</dbReference>
<dbReference type="GO" id="GO:0043161">
    <property type="term" value="P:proteasome-mediated ubiquitin-dependent protein catabolic process"/>
    <property type="evidence" value="ECO:0000318"/>
    <property type="project" value="GO_Central"/>
</dbReference>
<dbReference type="GO" id="GO:0016567">
    <property type="term" value="P:protein ubiquitination"/>
    <property type="evidence" value="ECO:0000314"/>
    <property type="project" value="ComplexPortal"/>
</dbReference>
<dbReference type="GO" id="GO:0006511">
    <property type="term" value="P:ubiquitin-dependent protein catabolic process"/>
    <property type="evidence" value="ECO:0000303"/>
    <property type="project" value="ComplexPortal"/>
</dbReference>
<dbReference type="GO" id="GO:0043162">
    <property type="term" value="P:ubiquitin-dependent protein catabolic process via the multivesicular body sorting pathway"/>
    <property type="evidence" value="ECO:0000315"/>
    <property type="project" value="SGD"/>
</dbReference>
<dbReference type="CDD" id="cd23117">
    <property type="entry name" value="RING-H2_TUL1-like"/>
    <property type="match status" value="1"/>
</dbReference>
<dbReference type="FunFam" id="3.30.40.10:FF:000626">
    <property type="entry name" value="Transmembrane ubiquitin ligase 1"/>
    <property type="match status" value="1"/>
</dbReference>
<dbReference type="Gene3D" id="3.30.40.10">
    <property type="entry name" value="Zinc/RING finger domain, C3HC4 (zinc finger)"/>
    <property type="match status" value="1"/>
</dbReference>
<dbReference type="InterPro" id="IPR021319">
    <property type="entry name" value="DUF2921"/>
</dbReference>
<dbReference type="InterPro" id="IPR050731">
    <property type="entry name" value="HRD1_E3_ubiq-ligases"/>
</dbReference>
<dbReference type="InterPro" id="IPR001841">
    <property type="entry name" value="Znf_RING"/>
</dbReference>
<dbReference type="InterPro" id="IPR013083">
    <property type="entry name" value="Znf_RING/FYVE/PHD"/>
</dbReference>
<dbReference type="InterPro" id="IPR024766">
    <property type="entry name" value="Znf_RING_H2"/>
</dbReference>
<dbReference type="PANTHER" id="PTHR22763">
    <property type="entry name" value="RING ZINC FINGER PROTEIN"/>
    <property type="match status" value="1"/>
</dbReference>
<dbReference type="PANTHER" id="PTHR22763:SF162">
    <property type="entry name" value="TRANSMEMBRANE E3 UBIQUITIN-PROTEIN LIGASE 1"/>
    <property type="match status" value="1"/>
</dbReference>
<dbReference type="Pfam" id="PF11145">
    <property type="entry name" value="DUF2921"/>
    <property type="match status" value="1"/>
</dbReference>
<dbReference type="Pfam" id="PF12678">
    <property type="entry name" value="zf-rbx1"/>
    <property type="match status" value="1"/>
</dbReference>
<dbReference type="SMART" id="SM00184">
    <property type="entry name" value="RING"/>
    <property type="match status" value="1"/>
</dbReference>
<dbReference type="SUPFAM" id="SSF57850">
    <property type="entry name" value="RING/U-box"/>
    <property type="match status" value="1"/>
</dbReference>
<dbReference type="PROSITE" id="PS50089">
    <property type="entry name" value="ZF_RING_2"/>
    <property type="match status" value="1"/>
</dbReference>
<sequence>MEIDGNTLVFIIVILFLFFSSPGGDGVSSQYEFNQLQRLKQQFRTEHNTFVNMTYTDSFRNITGLKLSYQDMLNNPLQNATYPLPGKDYDRWFPNQNYMVLPNDVIEAINTEVWNTSNDDASNLFPPNITSTLLGKIDLVSNNKYEKIRMPVPRFYEPATDFSEDIPPEGETYWSEWPSYGELHNVSFQHGEIAIQISHMSNLQDNNNYLRRNFINKKNDRWKLLNLQIDFSDKAEKEKHSIYSKAVYDIQRGRILSISQSSKFHSLFALPHYMSFQNDYNEKIFNDVKELVDEFWNFTDYTDVMTMKDVQDAYNNANFKCEYLIFLQLEPWNQYTRDQIKLIDDELNWPLGRPANLSSLPPINVVSGLLYSPDCGVRLGLHNVKGTRYELKIMSIRKHLLFGIALFAAQIYLLLTQMHHTNTPSMVNKISFYCFSMINLVDGSLATLYFVAASVVPELYLPLVISAFSCFILASIFEIRYLISIYASQVNEQNVGIINLLRGNTGTYDENRPRPAFIPDEGSIGGSLYGRFFFMLIIFTFLILSSTSWPRQLRMVFEYILIFILNSYWIPQIFRNAVKGIPSRRERARSSIGGNRSQNKMPLLWSFVIGTTIIRSLPVVYVFTYSSNVFRHHKDVHFVVFLSLWLLFQISILYSQDVLGSRWFLPKHTIPDGYSYFKPLSNEYISEHGGGTAEHTVDCAICMSDVPIYIEEIPETHKVDQHSYMVTPCNHVFHTSCLENWMNYKLQCPVCRSPLPPL</sequence>